<dbReference type="EC" id="7.1.1.9"/>
<dbReference type="EMBL" id="DQ019313">
    <property type="protein sequence ID" value="AAY26160.1"/>
    <property type="molecule type" value="Genomic_DNA"/>
</dbReference>
<dbReference type="SMR" id="Q4JQI5"/>
<dbReference type="FunCoup" id="Q4JQI5">
    <property type="interactions" value="14"/>
</dbReference>
<dbReference type="STRING" id="99883.ENSTNIP00000003835"/>
<dbReference type="InParanoid" id="Q4JQI5"/>
<dbReference type="UniPathway" id="UPA00705"/>
<dbReference type="Proteomes" id="UP000007303">
    <property type="component" value="Mitochondrion"/>
</dbReference>
<dbReference type="GO" id="GO:0005743">
    <property type="term" value="C:mitochondrial inner membrane"/>
    <property type="evidence" value="ECO:0007669"/>
    <property type="project" value="UniProtKB-SubCell"/>
</dbReference>
<dbReference type="GO" id="GO:0045277">
    <property type="term" value="C:respiratory chain complex IV"/>
    <property type="evidence" value="ECO:0000250"/>
    <property type="project" value="UniProtKB"/>
</dbReference>
<dbReference type="GO" id="GO:0004129">
    <property type="term" value="F:cytochrome-c oxidase activity"/>
    <property type="evidence" value="ECO:0007669"/>
    <property type="project" value="UniProtKB-EC"/>
</dbReference>
<dbReference type="GO" id="GO:0020037">
    <property type="term" value="F:heme binding"/>
    <property type="evidence" value="ECO:0007669"/>
    <property type="project" value="InterPro"/>
</dbReference>
<dbReference type="GO" id="GO:0046872">
    <property type="term" value="F:metal ion binding"/>
    <property type="evidence" value="ECO:0007669"/>
    <property type="project" value="UniProtKB-KW"/>
</dbReference>
<dbReference type="GO" id="GO:0015990">
    <property type="term" value="P:electron transport coupled proton transport"/>
    <property type="evidence" value="ECO:0007669"/>
    <property type="project" value="TreeGrafter"/>
</dbReference>
<dbReference type="GO" id="GO:0006123">
    <property type="term" value="P:mitochondrial electron transport, cytochrome c to oxygen"/>
    <property type="evidence" value="ECO:0007669"/>
    <property type="project" value="TreeGrafter"/>
</dbReference>
<dbReference type="GO" id="GO:0046686">
    <property type="term" value="P:response to cadmium ion"/>
    <property type="evidence" value="ECO:0007669"/>
    <property type="project" value="Ensembl"/>
</dbReference>
<dbReference type="GO" id="GO:0051597">
    <property type="term" value="P:response to methylmercury"/>
    <property type="evidence" value="ECO:0007669"/>
    <property type="project" value="Ensembl"/>
</dbReference>
<dbReference type="CDD" id="cd01663">
    <property type="entry name" value="Cyt_c_Oxidase_I"/>
    <property type="match status" value="1"/>
</dbReference>
<dbReference type="FunFam" id="1.20.210.10:FF:000001">
    <property type="entry name" value="Cytochrome c oxidase subunit 1"/>
    <property type="match status" value="1"/>
</dbReference>
<dbReference type="Gene3D" id="1.20.210.10">
    <property type="entry name" value="Cytochrome c oxidase-like, subunit I domain"/>
    <property type="match status" value="1"/>
</dbReference>
<dbReference type="InterPro" id="IPR023616">
    <property type="entry name" value="Cyt_c_oxase-like_su1_dom"/>
</dbReference>
<dbReference type="InterPro" id="IPR036927">
    <property type="entry name" value="Cyt_c_oxase-like_su1_sf"/>
</dbReference>
<dbReference type="InterPro" id="IPR000883">
    <property type="entry name" value="Cyt_C_Oxase_1"/>
</dbReference>
<dbReference type="InterPro" id="IPR023615">
    <property type="entry name" value="Cyt_c_Oxase_su1_BS"/>
</dbReference>
<dbReference type="InterPro" id="IPR033944">
    <property type="entry name" value="Cyt_c_oxase_su1_dom"/>
</dbReference>
<dbReference type="PANTHER" id="PTHR10422">
    <property type="entry name" value="CYTOCHROME C OXIDASE SUBUNIT 1"/>
    <property type="match status" value="1"/>
</dbReference>
<dbReference type="PANTHER" id="PTHR10422:SF18">
    <property type="entry name" value="CYTOCHROME C OXIDASE SUBUNIT 1"/>
    <property type="match status" value="1"/>
</dbReference>
<dbReference type="Pfam" id="PF00115">
    <property type="entry name" value="COX1"/>
    <property type="match status" value="1"/>
</dbReference>
<dbReference type="PRINTS" id="PR01165">
    <property type="entry name" value="CYCOXIDASEI"/>
</dbReference>
<dbReference type="SUPFAM" id="SSF81442">
    <property type="entry name" value="Cytochrome c oxidase subunit I-like"/>
    <property type="match status" value="1"/>
</dbReference>
<dbReference type="PROSITE" id="PS50855">
    <property type="entry name" value="COX1"/>
    <property type="match status" value="1"/>
</dbReference>
<dbReference type="PROSITE" id="PS00077">
    <property type="entry name" value="COX1_CUB"/>
    <property type="match status" value="1"/>
</dbReference>
<geneLocation type="mitochondrion"/>
<evidence type="ECO:0000250" key="1">
    <source>
        <dbReference type="UniProtKB" id="P00395"/>
    </source>
</evidence>
<evidence type="ECO:0000250" key="2">
    <source>
        <dbReference type="UniProtKB" id="P00396"/>
    </source>
</evidence>
<evidence type="ECO:0000250" key="3">
    <source>
        <dbReference type="UniProtKB" id="P00401"/>
    </source>
</evidence>
<evidence type="ECO:0000305" key="4"/>
<keyword id="KW-0106">Calcium</keyword>
<keyword id="KW-0186">Copper</keyword>
<keyword id="KW-0249">Electron transport</keyword>
<keyword id="KW-0349">Heme</keyword>
<keyword id="KW-0408">Iron</keyword>
<keyword id="KW-0460">Magnesium</keyword>
<keyword id="KW-0472">Membrane</keyword>
<keyword id="KW-0479">Metal-binding</keyword>
<keyword id="KW-0496">Mitochondrion</keyword>
<keyword id="KW-0999">Mitochondrion inner membrane</keyword>
<keyword id="KW-1185">Reference proteome</keyword>
<keyword id="KW-0679">Respiratory chain</keyword>
<keyword id="KW-0915">Sodium</keyword>
<keyword id="KW-1278">Translocase</keyword>
<keyword id="KW-0812">Transmembrane</keyword>
<keyword id="KW-1133">Transmembrane helix</keyword>
<keyword id="KW-0813">Transport</keyword>
<proteinExistence type="inferred from homology"/>
<name>COX1_TETNG</name>
<accession>Q4JQI5</accession>
<reference key="1">
    <citation type="journal article" date="2006" name="DNA Seq.">
        <title>The complete nucleotide sequence of the mitochondrial genome of Tetraodon nigroviridis.</title>
        <authorList>
            <person name="Yue G.H."/>
            <person name="Lo L.C."/>
            <person name="Zhu Z.Y."/>
            <person name="Lin G."/>
            <person name="Feng F."/>
        </authorList>
    </citation>
    <scope>NUCLEOTIDE SEQUENCE [LARGE SCALE GENOMIC DNA]</scope>
</reference>
<feature type="chain" id="PRO_0000183424" description="Cytochrome c oxidase subunit 1">
    <location>
        <begin position="1"/>
        <end position="515"/>
    </location>
</feature>
<feature type="topological domain" description="Mitochondrial matrix" evidence="2">
    <location>
        <begin position="1"/>
        <end position="11"/>
    </location>
</feature>
<feature type="transmembrane region" description="Helical; Name=I" evidence="2">
    <location>
        <begin position="12"/>
        <end position="40"/>
    </location>
</feature>
<feature type="topological domain" description="Mitochondrial intermembrane" evidence="2">
    <location>
        <begin position="41"/>
        <end position="50"/>
    </location>
</feature>
<feature type="transmembrane region" description="Helical; Name=II" evidence="2">
    <location>
        <begin position="51"/>
        <end position="86"/>
    </location>
</feature>
<feature type="topological domain" description="Mitochondrial matrix" evidence="2">
    <location>
        <begin position="87"/>
        <end position="94"/>
    </location>
</feature>
<feature type="transmembrane region" description="Helical; Name=III" evidence="2">
    <location>
        <begin position="95"/>
        <end position="117"/>
    </location>
</feature>
<feature type="topological domain" description="Mitochondrial intermembrane" evidence="2">
    <location>
        <begin position="118"/>
        <end position="140"/>
    </location>
</feature>
<feature type="transmembrane region" description="Helical; Name=IV" evidence="2">
    <location>
        <begin position="141"/>
        <end position="170"/>
    </location>
</feature>
<feature type="topological domain" description="Mitochondrial matrix" evidence="2">
    <location>
        <begin position="171"/>
        <end position="182"/>
    </location>
</feature>
<feature type="transmembrane region" description="Helical; Name=V" evidence="2">
    <location>
        <begin position="183"/>
        <end position="212"/>
    </location>
</feature>
<feature type="topological domain" description="Mitochondrial intermembrane" evidence="2">
    <location>
        <begin position="213"/>
        <end position="227"/>
    </location>
</feature>
<feature type="transmembrane region" description="Helical; Name=VI" evidence="2">
    <location>
        <begin position="228"/>
        <end position="261"/>
    </location>
</feature>
<feature type="topological domain" description="Mitochondrial matrix" evidence="2">
    <location>
        <begin position="262"/>
        <end position="269"/>
    </location>
</feature>
<feature type="transmembrane region" description="Helical; Name=VII" evidence="2">
    <location>
        <begin position="270"/>
        <end position="286"/>
    </location>
</feature>
<feature type="topological domain" description="Mitochondrial intermembrane" evidence="2">
    <location>
        <begin position="287"/>
        <end position="298"/>
    </location>
</feature>
<feature type="transmembrane region" description="Helical; Name=VIII" evidence="2">
    <location>
        <begin position="299"/>
        <end position="327"/>
    </location>
</feature>
<feature type="topological domain" description="Mitochondrial matrix" evidence="2">
    <location>
        <begin position="328"/>
        <end position="335"/>
    </location>
</feature>
<feature type="transmembrane region" description="Helical; Name=IX" evidence="2">
    <location>
        <begin position="336"/>
        <end position="357"/>
    </location>
</feature>
<feature type="topological domain" description="Mitochondrial intermembrane" evidence="2">
    <location>
        <begin position="358"/>
        <end position="370"/>
    </location>
</feature>
<feature type="transmembrane region" description="Helical; Name=X" evidence="2">
    <location>
        <begin position="371"/>
        <end position="400"/>
    </location>
</feature>
<feature type="topological domain" description="Mitochondrial matrix" evidence="2">
    <location>
        <begin position="401"/>
        <end position="406"/>
    </location>
</feature>
<feature type="transmembrane region" description="Helical; Name=XI" evidence="2">
    <location>
        <begin position="407"/>
        <end position="433"/>
    </location>
</feature>
<feature type="topological domain" description="Mitochondrial intermembrane" evidence="2">
    <location>
        <begin position="434"/>
        <end position="446"/>
    </location>
</feature>
<feature type="transmembrane region" description="Helical; Name=XII" evidence="2">
    <location>
        <begin position="447"/>
        <end position="478"/>
    </location>
</feature>
<feature type="topological domain" description="Mitochondrial matrix" evidence="2">
    <location>
        <begin position="479"/>
        <end position="515"/>
    </location>
</feature>
<feature type="binding site" evidence="2">
    <location>
        <position position="40"/>
    </location>
    <ligand>
        <name>Na(+)</name>
        <dbReference type="ChEBI" id="CHEBI:29101"/>
    </ligand>
</feature>
<feature type="binding site" evidence="2">
    <location>
        <position position="45"/>
    </location>
    <ligand>
        <name>Na(+)</name>
        <dbReference type="ChEBI" id="CHEBI:29101"/>
    </ligand>
</feature>
<feature type="binding site" description="axial binding residue" evidence="2">
    <location>
        <position position="61"/>
    </location>
    <ligand>
        <name>Fe(II)-heme a</name>
        <dbReference type="ChEBI" id="CHEBI:61715"/>
        <note>low-spin</note>
    </ligand>
    <ligandPart>
        <name>Fe</name>
        <dbReference type="ChEBI" id="CHEBI:18248"/>
    </ligandPart>
</feature>
<feature type="binding site" evidence="2">
    <location>
        <position position="240"/>
    </location>
    <ligand>
        <name>Cu cation</name>
        <dbReference type="ChEBI" id="CHEBI:23378"/>
        <label>B</label>
    </ligand>
</feature>
<feature type="binding site" evidence="2">
    <location>
        <position position="244"/>
    </location>
    <ligand>
        <name>O2</name>
        <dbReference type="ChEBI" id="CHEBI:15379"/>
    </ligand>
</feature>
<feature type="binding site" evidence="2">
    <location>
        <position position="290"/>
    </location>
    <ligand>
        <name>Cu cation</name>
        <dbReference type="ChEBI" id="CHEBI:23378"/>
        <label>B</label>
    </ligand>
</feature>
<feature type="binding site" evidence="2">
    <location>
        <position position="291"/>
    </location>
    <ligand>
        <name>Cu cation</name>
        <dbReference type="ChEBI" id="CHEBI:23378"/>
        <label>B</label>
    </ligand>
</feature>
<feature type="binding site" evidence="2">
    <location>
        <position position="368"/>
    </location>
    <ligand>
        <name>Mg(2+)</name>
        <dbReference type="ChEBI" id="CHEBI:18420"/>
        <note>ligand shared with MT-CO2</note>
    </ligand>
</feature>
<feature type="binding site" evidence="2">
    <location>
        <position position="369"/>
    </location>
    <ligand>
        <name>Mg(2+)</name>
        <dbReference type="ChEBI" id="CHEBI:18420"/>
        <note>ligand shared with MT-CO2</note>
    </ligand>
</feature>
<feature type="binding site" description="axial binding residue" evidence="2">
    <location>
        <position position="376"/>
    </location>
    <ligand>
        <name>heme a3</name>
        <dbReference type="ChEBI" id="CHEBI:83282"/>
        <note>high-spin</note>
    </ligand>
    <ligandPart>
        <name>Fe</name>
        <dbReference type="ChEBI" id="CHEBI:18248"/>
    </ligandPart>
</feature>
<feature type="binding site" description="axial binding residue" evidence="2">
    <location>
        <position position="378"/>
    </location>
    <ligand>
        <name>Fe(II)-heme a</name>
        <dbReference type="ChEBI" id="CHEBI:61715"/>
        <note>low-spin</note>
    </ligand>
    <ligandPart>
        <name>Fe</name>
        <dbReference type="ChEBI" id="CHEBI:18248"/>
    </ligandPart>
</feature>
<feature type="binding site" evidence="2">
    <location>
        <position position="441"/>
    </location>
    <ligand>
        <name>Na(+)</name>
        <dbReference type="ChEBI" id="CHEBI:29101"/>
    </ligand>
</feature>
<feature type="cross-link" description="1'-histidyl-3'-tyrosine (His-Tyr)" evidence="2">
    <location>
        <begin position="240"/>
        <end position="244"/>
    </location>
</feature>
<comment type="function">
    <text evidence="3">Component of the cytochrome c oxidase, the last enzyme in the mitochondrial electron transport chain which drives oxidative phosphorylation. The respiratory chain contains 3 multisubunit complexes succinate dehydrogenase (complex II, CII), ubiquinol-cytochrome c oxidoreductase (cytochrome b-c1 complex, complex III, CIII) and cytochrome c oxidase (complex IV, CIV), that cooperate to transfer electrons derived from NADH and succinate to molecular oxygen, creating an electrochemical gradient over the inner membrane that drives transmembrane transport and the ATP synthase. Cytochrome c oxidase is the component of the respiratory chain that catalyzes the reduction of oxygen to water. Electrons originating from reduced cytochrome c in the intermembrane space (IMS) are transferred via the dinuclear copper A center (CU(A)) of subunit 2 and heme A of subunit 1 to the active site in subunit 1, a binuclear center (BNC) formed by heme A3 and copper B (CU(B)). The BNC reduces molecular oxygen to 2 water molecules using 4 electrons from cytochrome c in the IMS and 4 protons from the mitochondrial matrix.</text>
</comment>
<comment type="catalytic activity">
    <reaction evidence="3">
        <text>4 Fe(II)-[cytochrome c] + O2 + 8 H(+)(in) = 4 Fe(III)-[cytochrome c] + 2 H2O + 4 H(+)(out)</text>
        <dbReference type="Rhea" id="RHEA:11436"/>
        <dbReference type="Rhea" id="RHEA-COMP:10350"/>
        <dbReference type="Rhea" id="RHEA-COMP:14399"/>
        <dbReference type="ChEBI" id="CHEBI:15377"/>
        <dbReference type="ChEBI" id="CHEBI:15378"/>
        <dbReference type="ChEBI" id="CHEBI:15379"/>
        <dbReference type="ChEBI" id="CHEBI:29033"/>
        <dbReference type="ChEBI" id="CHEBI:29034"/>
        <dbReference type="EC" id="7.1.1.9"/>
    </reaction>
    <physiologicalReaction direction="left-to-right" evidence="3">
        <dbReference type="Rhea" id="RHEA:11437"/>
    </physiologicalReaction>
</comment>
<comment type="cofactor">
    <cofactor evidence="2">
        <name>heme</name>
        <dbReference type="ChEBI" id="CHEBI:30413"/>
    </cofactor>
    <text evidence="2">Binds 2 heme A groups non-covalently per subunit.</text>
</comment>
<comment type="cofactor">
    <cofactor evidence="2">
        <name>Cu cation</name>
        <dbReference type="ChEBI" id="CHEBI:23378"/>
    </cofactor>
    <text evidence="2">Binds a copper B center.</text>
</comment>
<comment type="pathway">
    <text evidence="3">Energy metabolism; oxidative phosphorylation.</text>
</comment>
<comment type="subunit">
    <text evidence="1 2">Component of the cytochrome c oxidase (complex IV, CIV), a multisubunit enzyme composed of 14 subunits. The complex is composed of a catalytic core of 3 subunits MT-CO1, MT-CO2 and MT-CO3, encoded in the mitochondrial DNA, and 11 supernumerary subunits COX4I, COX5A, COX5B, COX6A, COX6B, COX6C, COX7A, COX7B, COX7C, COX8 and NDUFA4, which are encoded in the nuclear genome. The complex exists as a monomer or a dimer and forms supercomplexes (SCs) in the inner mitochondrial membrane with NADH-ubiquinone oxidoreductase (complex I, CI) and ubiquinol-cytochrome c oxidoreductase (cytochrome b-c1 complex, complex III, CIII), resulting in different assemblies (supercomplex SCI(1)III(2)IV(1) and megacomplex MCI(2)III(2)IV(2)) (By similarity). As a newly synthesized protein, rapidly incorporates into a multi-subunit assembly intermediate in the inner membrane, called MITRAC (mitochondrial translation regulation assembly intermediate of cytochrome c oxidase) complex, whose core components are COA3/MITRAC12 and COX14. Within the MITRAC complex, interacts with COA3 and with SMIM20/MITRAC7; the interaction with SMIM20 stabilizes the newly synthesized MT-CO1 and prevents its premature turnover. Interacts with TMEM177 in a COX20-dependent manner (By similarity).</text>
</comment>
<comment type="subcellular location">
    <subcellularLocation>
        <location evidence="2">Mitochondrion inner membrane</location>
        <topology evidence="2">Multi-pass membrane protein</topology>
    </subcellularLocation>
</comment>
<comment type="similarity">
    <text evidence="4">Belongs to the heme-copper respiratory oxidase family.</text>
</comment>
<organism>
    <name type="scientific">Tetraodon nigroviridis</name>
    <name type="common">Spotted green pufferfish</name>
    <name type="synonym">Chelonodon nigroviridis</name>
    <dbReference type="NCBI Taxonomy" id="99883"/>
    <lineage>
        <taxon>Eukaryota</taxon>
        <taxon>Metazoa</taxon>
        <taxon>Chordata</taxon>
        <taxon>Craniata</taxon>
        <taxon>Vertebrata</taxon>
        <taxon>Euteleostomi</taxon>
        <taxon>Actinopterygii</taxon>
        <taxon>Neopterygii</taxon>
        <taxon>Teleostei</taxon>
        <taxon>Neoteleostei</taxon>
        <taxon>Acanthomorphata</taxon>
        <taxon>Eupercaria</taxon>
        <taxon>Tetraodontiformes</taxon>
        <taxon>Tetradontoidea</taxon>
        <taxon>Tetraodontidae</taxon>
        <taxon>Tetraodon</taxon>
    </lineage>
</organism>
<sequence>MAITRWFFSTNHKDIGTLYLVFGAWAGMVGTALSLLIRAELSQPGALLGDDQIYNVIVTAHAFVMIFFMVMPIMIGGFGNWLVPLMIGAPDMAFPRMNNMSFWLLPPSFLLLLASSGVEAGAGTGWTVYPPLAGNLAHAGASVDLTIFSLHLAGVSSILGAINFITTIINMKPPAISQYQTPLFVWAVLITAVLLLLSLPVLAAGITMLLTDRNLNTTFFDPAGGGDPILYQHLFWFFGHPEVYILILPGFGMISHIVAYYAGKKEPFGYMGMVWAMMAIGLLGFIVWAHHMFTVGMDVDTRAYFTSATMIIAIPTGVKVFSWLATLHGGSIKWETPMLWALGFIFLFTVGGLTGIVLANSSLDVVLHDTYYVVAHFHYVLSMGAVFAIMGAFVHWFPLFSGYTLHSTWTKIHFGVMFVGVNLTFFPQHFLGLAGMPRRYSDYPDAYTLWNTVSSIGSLISLSAVIMFLFILWEAFAAKREVESVELTTTNVEWRCGCPPPYHTFEEPAFVQAQT</sequence>
<protein>
    <recommendedName>
        <fullName>Cytochrome c oxidase subunit 1</fullName>
        <ecNumber>7.1.1.9</ecNumber>
    </recommendedName>
    <alternativeName>
        <fullName>Cytochrome c oxidase polypeptide I</fullName>
    </alternativeName>
</protein>
<gene>
    <name type="primary">mt-co1</name>
    <name type="synonym">coi</name>
    <name type="synonym">coxi</name>
    <name type="synonym">mtco1</name>
</gene>